<protein>
    <recommendedName>
        <fullName evidence="1">UvrABC system protein B</fullName>
        <shortName evidence="1">Protein UvrB</shortName>
    </recommendedName>
    <alternativeName>
        <fullName evidence="1">Excinuclease ABC subunit B</fullName>
    </alternativeName>
</protein>
<dbReference type="EMBL" id="CP001078">
    <property type="protein sequence ID" value="ACD53835.1"/>
    <property type="molecule type" value="Genomic_DNA"/>
</dbReference>
<dbReference type="RefSeq" id="WP_012451659.1">
    <property type="nucleotide sequence ID" value="NC_010723.1"/>
</dbReference>
<dbReference type="SMR" id="B2UZZ0"/>
<dbReference type="KEGG" id="cbt:CLH_3099"/>
<dbReference type="HOGENOM" id="CLU_009621_2_1_9"/>
<dbReference type="GO" id="GO:0005737">
    <property type="term" value="C:cytoplasm"/>
    <property type="evidence" value="ECO:0007669"/>
    <property type="project" value="UniProtKB-SubCell"/>
</dbReference>
<dbReference type="GO" id="GO:0009380">
    <property type="term" value="C:excinuclease repair complex"/>
    <property type="evidence" value="ECO:0007669"/>
    <property type="project" value="InterPro"/>
</dbReference>
<dbReference type="GO" id="GO:0005524">
    <property type="term" value="F:ATP binding"/>
    <property type="evidence" value="ECO:0007669"/>
    <property type="project" value="UniProtKB-UniRule"/>
</dbReference>
<dbReference type="GO" id="GO:0016887">
    <property type="term" value="F:ATP hydrolysis activity"/>
    <property type="evidence" value="ECO:0007669"/>
    <property type="project" value="InterPro"/>
</dbReference>
<dbReference type="GO" id="GO:0003677">
    <property type="term" value="F:DNA binding"/>
    <property type="evidence" value="ECO:0007669"/>
    <property type="project" value="UniProtKB-UniRule"/>
</dbReference>
<dbReference type="GO" id="GO:0009381">
    <property type="term" value="F:excinuclease ABC activity"/>
    <property type="evidence" value="ECO:0007669"/>
    <property type="project" value="UniProtKB-UniRule"/>
</dbReference>
<dbReference type="GO" id="GO:0004386">
    <property type="term" value="F:helicase activity"/>
    <property type="evidence" value="ECO:0007669"/>
    <property type="project" value="UniProtKB-KW"/>
</dbReference>
<dbReference type="GO" id="GO:0006289">
    <property type="term" value="P:nucleotide-excision repair"/>
    <property type="evidence" value="ECO:0007669"/>
    <property type="project" value="UniProtKB-UniRule"/>
</dbReference>
<dbReference type="GO" id="GO:0009432">
    <property type="term" value="P:SOS response"/>
    <property type="evidence" value="ECO:0007669"/>
    <property type="project" value="UniProtKB-UniRule"/>
</dbReference>
<dbReference type="CDD" id="cd17916">
    <property type="entry name" value="DEXHc_UvrB"/>
    <property type="match status" value="1"/>
</dbReference>
<dbReference type="CDD" id="cd18790">
    <property type="entry name" value="SF2_C_UvrB"/>
    <property type="match status" value="1"/>
</dbReference>
<dbReference type="Gene3D" id="3.40.50.300">
    <property type="entry name" value="P-loop containing nucleotide triphosphate hydrolases"/>
    <property type="match status" value="3"/>
</dbReference>
<dbReference type="Gene3D" id="4.10.860.10">
    <property type="entry name" value="UVR domain"/>
    <property type="match status" value="1"/>
</dbReference>
<dbReference type="HAMAP" id="MF_00204">
    <property type="entry name" value="UvrB"/>
    <property type="match status" value="1"/>
</dbReference>
<dbReference type="InterPro" id="IPR006935">
    <property type="entry name" value="Helicase/UvrB_N"/>
</dbReference>
<dbReference type="InterPro" id="IPR014001">
    <property type="entry name" value="Helicase_ATP-bd"/>
</dbReference>
<dbReference type="InterPro" id="IPR001650">
    <property type="entry name" value="Helicase_C-like"/>
</dbReference>
<dbReference type="InterPro" id="IPR027417">
    <property type="entry name" value="P-loop_NTPase"/>
</dbReference>
<dbReference type="InterPro" id="IPR001943">
    <property type="entry name" value="UVR_dom"/>
</dbReference>
<dbReference type="InterPro" id="IPR036876">
    <property type="entry name" value="UVR_dom_sf"/>
</dbReference>
<dbReference type="InterPro" id="IPR004807">
    <property type="entry name" value="UvrB"/>
</dbReference>
<dbReference type="InterPro" id="IPR041471">
    <property type="entry name" value="UvrB_inter"/>
</dbReference>
<dbReference type="InterPro" id="IPR024759">
    <property type="entry name" value="UvrB_YAD/RRR_dom"/>
</dbReference>
<dbReference type="NCBIfam" id="NF003673">
    <property type="entry name" value="PRK05298.1"/>
    <property type="match status" value="1"/>
</dbReference>
<dbReference type="NCBIfam" id="TIGR00631">
    <property type="entry name" value="uvrb"/>
    <property type="match status" value="1"/>
</dbReference>
<dbReference type="PANTHER" id="PTHR24029">
    <property type="entry name" value="UVRABC SYSTEM PROTEIN B"/>
    <property type="match status" value="1"/>
</dbReference>
<dbReference type="PANTHER" id="PTHR24029:SF0">
    <property type="entry name" value="UVRABC SYSTEM PROTEIN B"/>
    <property type="match status" value="1"/>
</dbReference>
<dbReference type="Pfam" id="PF00271">
    <property type="entry name" value="Helicase_C"/>
    <property type="match status" value="1"/>
</dbReference>
<dbReference type="Pfam" id="PF04851">
    <property type="entry name" value="ResIII"/>
    <property type="match status" value="1"/>
</dbReference>
<dbReference type="Pfam" id="PF02151">
    <property type="entry name" value="UVR"/>
    <property type="match status" value="1"/>
</dbReference>
<dbReference type="Pfam" id="PF12344">
    <property type="entry name" value="UvrB"/>
    <property type="match status" value="1"/>
</dbReference>
<dbReference type="Pfam" id="PF17757">
    <property type="entry name" value="UvrB_inter"/>
    <property type="match status" value="1"/>
</dbReference>
<dbReference type="SMART" id="SM00487">
    <property type="entry name" value="DEXDc"/>
    <property type="match status" value="1"/>
</dbReference>
<dbReference type="SMART" id="SM00490">
    <property type="entry name" value="HELICc"/>
    <property type="match status" value="1"/>
</dbReference>
<dbReference type="SUPFAM" id="SSF46600">
    <property type="entry name" value="C-terminal UvrC-binding domain of UvrB"/>
    <property type="match status" value="1"/>
</dbReference>
<dbReference type="SUPFAM" id="SSF52540">
    <property type="entry name" value="P-loop containing nucleoside triphosphate hydrolases"/>
    <property type="match status" value="2"/>
</dbReference>
<dbReference type="PROSITE" id="PS51192">
    <property type="entry name" value="HELICASE_ATP_BIND_1"/>
    <property type="match status" value="1"/>
</dbReference>
<dbReference type="PROSITE" id="PS51194">
    <property type="entry name" value="HELICASE_CTER"/>
    <property type="match status" value="1"/>
</dbReference>
<dbReference type="PROSITE" id="PS50151">
    <property type="entry name" value="UVR"/>
    <property type="match status" value="1"/>
</dbReference>
<sequence length="657" mass="75604">MGNFKIHSKFKPTGDQPKAIETILKSIKKGNEFQTLLGVTGSGKTFTMANIIEKLQRPTLILAHNKTLAAQLCSEFKEFFPENIVEYFVSYYDYYQPEAYVPQTDTFIEKDASINDEIDKLRHSATSALFERRDVIIVASVSCIYGLGNPDEYKKLTISLRKGMQKERDEIIKKLIEIQYERNDIDFSRGTFRVRGDLLDIIPSSTSSKGIRIEFFGDEIDRIREFDVLTGTILGERNHVLIFPASHFATSKETVERSLGEIENELENRLRELNSQEKLLEAQRLRQRTNFDIEMIREMGYCSGIENYSRILDGRAPGTPPKTLIDYFPEDFLLFIDESHVTLPQVRAMYAGDRSRKNTLVDYGFRLPCAYDNRPLKFEEFEKKINQVMFVSATPAQYELEHSQSIAEQVIRPTGLLDPEIIIKPVKGQIDDLYTEIQETISRGYRILITTLTKRMAEDLTKYMIELGVKATYMHSDIDTIERMKIIRDLRLGEYDVLVGINLLREGLDIPEVALVAILDADKEGFLRSETSLIQTIGRAARNSESKVIMYADNITKSMKKAISETERRRKIQTEYNEEHGIIPQTINKEVRDLIEATKVAEESTEYGIEATKSLTKKEVKKLIKEYTEEMMLAAKNLQFERAAQLRDEIEELKGKE</sequence>
<gene>
    <name evidence="1" type="primary">uvrB</name>
    <name type="ordered locus">CLH_3099</name>
</gene>
<feature type="chain" id="PRO_1000099542" description="UvrABC system protein B">
    <location>
        <begin position="1"/>
        <end position="657"/>
    </location>
</feature>
<feature type="domain" description="Helicase ATP-binding" evidence="1">
    <location>
        <begin position="25"/>
        <end position="182"/>
    </location>
</feature>
<feature type="domain" description="Helicase C-terminal" evidence="1">
    <location>
        <begin position="429"/>
        <end position="595"/>
    </location>
</feature>
<feature type="domain" description="UVR" evidence="1">
    <location>
        <begin position="621"/>
        <end position="656"/>
    </location>
</feature>
<feature type="short sequence motif" description="Beta-hairpin">
    <location>
        <begin position="91"/>
        <end position="114"/>
    </location>
</feature>
<feature type="binding site" evidence="1">
    <location>
        <begin position="38"/>
        <end position="45"/>
    </location>
    <ligand>
        <name>ATP</name>
        <dbReference type="ChEBI" id="CHEBI:30616"/>
    </ligand>
</feature>
<keyword id="KW-0067">ATP-binding</keyword>
<keyword id="KW-0963">Cytoplasm</keyword>
<keyword id="KW-0227">DNA damage</keyword>
<keyword id="KW-0228">DNA excision</keyword>
<keyword id="KW-0234">DNA repair</keyword>
<keyword id="KW-0267">Excision nuclease</keyword>
<keyword id="KW-0347">Helicase</keyword>
<keyword id="KW-0378">Hydrolase</keyword>
<keyword id="KW-0547">Nucleotide-binding</keyword>
<keyword id="KW-0742">SOS response</keyword>
<reference key="1">
    <citation type="submission" date="2008-05" db="EMBL/GenBank/DDBJ databases">
        <title>Complete genome sequence of Clostridium botulinum E3 str. Alaska E43.</title>
        <authorList>
            <person name="Brinkac L.M."/>
            <person name="Brown J.L."/>
            <person name="Bruce D."/>
            <person name="Detter C."/>
            <person name="Munk C."/>
            <person name="Smith L.A."/>
            <person name="Smith T.J."/>
            <person name="Sutton G."/>
            <person name="Brettin T.S."/>
        </authorList>
    </citation>
    <scope>NUCLEOTIDE SEQUENCE [LARGE SCALE GENOMIC DNA]</scope>
    <source>
        <strain>Alaska E43 / Type E3</strain>
    </source>
</reference>
<accession>B2UZZ0</accession>
<evidence type="ECO:0000255" key="1">
    <source>
        <dbReference type="HAMAP-Rule" id="MF_00204"/>
    </source>
</evidence>
<organism>
    <name type="scientific">Clostridium botulinum (strain Alaska E43 / Type E3)</name>
    <dbReference type="NCBI Taxonomy" id="508767"/>
    <lineage>
        <taxon>Bacteria</taxon>
        <taxon>Bacillati</taxon>
        <taxon>Bacillota</taxon>
        <taxon>Clostridia</taxon>
        <taxon>Eubacteriales</taxon>
        <taxon>Clostridiaceae</taxon>
        <taxon>Clostridium</taxon>
    </lineage>
</organism>
<name>UVRB_CLOBA</name>
<comment type="function">
    <text evidence="1">The UvrABC repair system catalyzes the recognition and processing of DNA lesions. A damage recognition complex composed of 2 UvrA and 2 UvrB subunits scans DNA for abnormalities. Upon binding of the UvrA(2)B(2) complex to a putative damaged site, the DNA wraps around one UvrB monomer. DNA wrap is dependent on ATP binding by UvrB and probably causes local melting of the DNA helix, facilitating insertion of UvrB beta-hairpin between the DNA strands. Then UvrB probes one DNA strand for the presence of a lesion. If a lesion is found the UvrA subunits dissociate and the UvrB-DNA preincision complex is formed. This complex is subsequently bound by UvrC and the second UvrB is released. If no lesion is found, the DNA wraps around the other UvrB subunit that will check the other stand for damage.</text>
</comment>
<comment type="subunit">
    <text evidence="1">Forms a heterotetramer with UvrA during the search for lesions. Interacts with UvrC in an incision complex.</text>
</comment>
<comment type="subcellular location">
    <subcellularLocation>
        <location evidence="1">Cytoplasm</location>
    </subcellularLocation>
</comment>
<comment type="domain">
    <text evidence="1">The beta-hairpin motif is involved in DNA binding.</text>
</comment>
<comment type="similarity">
    <text evidence="1">Belongs to the UvrB family.</text>
</comment>
<proteinExistence type="inferred from homology"/>